<protein>
    <recommendedName>
        <fullName evidence="1">Small ribosomal subunit protein uS7</fullName>
    </recommendedName>
    <alternativeName>
        <fullName evidence="2">30S ribosomal protein S7</fullName>
    </alternativeName>
</protein>
<comment type="function">
    <text evidence="1">One of the primary rRNA binding proteins, it binds directly to 16S rRNA where it nucleates assembly of the head domain of the 30S subunit. Is located at the subunit interface close to the decoding center, probably blocks exit of the E-site tRNA.</text>
</comment>
<comment type="subunit">
    <text evidence="1">Part of the 30S ribosomal subunit. Contacts proteins S9 and S11.</text>
</comment>
<comment type="similarity">
    <text evidence="1">Belongs to the universal ribosomal protein uS7 family.</text>
</comment>
<evidence type="ECO:0000255" key="1">
    <source>
        <dbReference type="HAMAP-Rule" id="MF_00480"/>
    </source>
</evidence>
<evidence type="ECO:0000305" key="2"/>
<organism>
    <name type="scientific">Bifidobacterium longum (strain DJO10A)</name>
    <dbReference type="NCBI Taxonomy" id="205913"/>
    <lineage>
        <taxon>Bacteria</taxon>
        <taxon>Bacillati</taxon>
        <taxon>Actinomycetota</taxon>
        <taxon>Actinomycetes</taxon>
        <taxon>Bifidobacteriales</taxon>
        <taxon>Bifidobacteriaceae</taxon>
        <taxon>Bifidobacterium</taxon>
    </lineage>
</organism>
<dbReference type="EMBL" id="CP000605">
    <property type="protein sequence ID" value="ACD98300.1"/>
    <property type="molecule type" value="Genomic_DNA"/>
</dbReference>
<dbReference type="RefSeq" id="WP_003828652.1">
    <property type="nucleotide sequence ID" value="NZ_AABM02000006.1"/>
</dbReference>
<dbReference type="SMR" id="B3DT31"/>
<dbReference type="GeneID" id="69577753"/>
<dbReference type="KEGG" id="blj:BLD_0854"/>
<dbReference type="HOGENOM" id="CLU_072226_1_1_11"/>
<dbReference type="Proteomes" id="UP000002419">
    <property type="component" value="Chromosome"/>
</dbReference>
<dbReference type="GO" id="GO:0015935">
    <property type="term" value="C:small ribosomal subunit"/>
    <property type="evidence" value="ECO:0007669"/>
    <property type="project" value="InterPro"/>
</dbReference>
<dbReference type="GO" id="GO:0019843">
    <property type="term" value="F:rRNA binding"/>
    <property type="evidence" value="ECO:0007669"/>
    <property type="project" value="UniProtKB-UniRule"/>
</dbReference>
<dbReference type="GO" id="GO:0003735">
    <property type="term" value="F:structural constituent of ribosome"/>
    <property type="evidence" value="ECO:0007669"/>
    <property type="project" value="InterPro"/>
</dbReference>
<dbReference type="GO" id="GO:0000049">
    <property type="term" value="F:tRNA binding"/>
    <property type="evidence" value="ECO:0007669"/>
    <property type="project" value="UniProtKB-UniRule"/>
</dbReference>
<dbReference type="GO" id="GO:0006412">
    <property type="term" value="P:translation"/>
    <property type="evidence" value="ECO:0007669"/>
    <property type="project" value="UniProtKB-UniRule"/>
</dbReference>
<dbReference type="CDD" id="cd14869">
    <property type="entry name" value="uS7_Bacteria"/>
    <property type="match status" value="1"/>
</dbReference>
<dbReference type="FunFam" id="1.10.455.10:FF:000001">
    <property type="entry name" value="30S ribosomal protein S7"/>
    <property type="match status" value="1"/>
</dbReference>
<dbReference type="Gene3D" id="1.10.455.10">
    <property type="entry name" value="Ribosomal protein S7 domain"/>
    <property type="match status" value="1"/>
</dbReference>
<dbReference type="HAMAP" id="MF_00480_B">
    <property type="entry name" value="Ribosomal_uS7_B"/>
    <property type="match status" value="1"/>
</dbReference>
<dbReference type="InterPro" id="IPR000235">
    <property type="entry name" value="Ribosomal_uS7"/>
</dbReference>
<dbReference type="InterPro" id="IPR005717">
    <property type="entry name" value="Ribosomal_uS7_bac/org-type"/>
</dbReference>
<dbReference type="InterPro" id="IPR020606">
    <property type="entry name" value="Ribosomal_uS7_CS"/>
</dbReference>
<dbReference type="InterPro" id="IPR023798">
    <property type="entry name" value="Ribosomal_uS7_dom"/>
</dbReference>
<dbReference type="InterPro" id="IPR036823">
    <property type="entry name" value="Ribosomal_uS7_dom_sf"/>
</dbReference>
<dbReference type="NCBIfam" id="TIGR01029">
    <property type="entry name" value="rpsG_bact"/>
    <property type="match status" value="1"/>
</dbReference>
<dbReference type="PANTHER" id="PTHR11205">
    <property type="entry name" value="RIBOSOMAL PROTEIN S7"/>
    <property type="match status" value="1"/>
</dbReference>
<dbReference type="Pfam" id="PF00177">
    <property type="entry name" value="Ribosomal_S7"/>
    <property type="match status" value="1"/>
</dbReference>
<dbReference type="PIRSF" id="PIRSF002122">
    <property type="entry name" value="RPS7p_RPS7a_RPS5e_RPS7o"/>
    <property type="match status" value="1"/>
</dbReference>
<dbReference type="SUPFAM" id="SSF47973">
    <property type="entry name" value="Ribosomal protein S7"/>
    <property type="match status" value="1"/>
</dbReference>
<dbReference type="PROSITE" id="PS00052">
    <property type="entry name" value="RIBOSOMAL_S7"/>
    <property type="match status" value="1"/>
</dbReference>
<gene>
    <name evidence="1" type="primary">rpsG</name>
    <name type="ordered locus">BLD_0854</name>
</gene>
<feature type="chain" id="PRO_1000125898" description="Small ribosomal subunit protein uS7">
    <location>
        <begin position="1"/>
        <end position="156"/>
    </location>
</feature>
<proteinExistence type="inferred from homology"/>
<accession>B3DT31</accession>
<sequence>MSRKGPSKKHVVLPDPIYGSTVVAQLINKILLDGKKSIAEDIVYSALDMVKEKSDQEPVAVLKRALDNIRPSLEVRSRRVGGATYQVPVEVKPNRANTLSLRWLTDFSRARREKTMAERLANEILDASNGLGASVKRREDTHKMAEANKAFAHYRW</sequence>
<reference key="1">
    <citation type="journal article" date="2008" name="BMC Genomics">
        <title>Comparative genomic analysis of the gut bacterium Bifidobacterium longum reveals loci susceptible to deletion during pure culture growth.</title>
        <authorList>
            <person name="Lee J.H."/>
            <person name="Karamychev V.N."/>
            <person name="Kozyavkin S.A."/>
            <person name="Mills D."/>
            <person name="Pavlov A.R."/>
            <person name="Pavlova N.V."/>
            <person name="Polouchine N.N."/>
            <person name="Richardson P.M."/>
            <person name="Shakhova V.V."/>
            <person name="Slesarev A.I."/>
            <person name="Weimer B."/>
            <person name="O'Sullivan D.J."/>
        </authorList>
    </citation>
    <scope>NUCLEOTIDE SEQUENCE [LARGE SCALE GENOMIC DNA]</scope>
    <source>
        <strain>DJO10A</strain>
    </source>
</reference>
<name>RS7_BIFLD</name>
<keyword id="KW-0687">Ribonucleoprotein</keyword>
<keyword id="KW-0689">Ribosomal protein</keyword>
<keyword id="KW-0694">RNA-binding</keyword>
<keyword id="KW-0699">rRNA-binding</keyword>
<keyword id="KW-0820">tRNA-binding</keyword>